<reference key="1">
    <citation type="journal article" date="2006" name="Cancer Res.">
        <title>Identification of potential human oncogenes by mapping the common viral integration sites in avian nephroblastoma.</title>
        <authorList>
            <person name="Pajer P."/>
            <person name="Pecenka V."/>
            <person name="Kralova J."/>
            <person name="Karafiat V."/>
            <person name="Prukova D."/>
            <person name="Zemanova Z."/>
            <person name="Kodet R."/>
            <person name="Dvorak M."/>
        </authorList>
    </citation>
    <scope>NUCLEOTIDE SEQUENCE [MRNA]</scope>
    <scope>TISSUE SPECIFICITY</scope>
</reference>
<accession>Q58NQ5</accession>
<keyword id="KW-0010">Activator</keyword>
<keyword id="KW-0238">DNA-binding</keyword>
<keyword id="KW-0479">Metal-binding</keyword>
<keyword id="KW-0539">Nucleus</keyword>
<keyword id="KW-0656">Proto-oncogene</keyword>
<keyword id="KW-1185">Reference proteome</keyword>
<keyword id="KW-0677">Repeat</keyword>
<keyword id="KW-0804">Transcription</keyword>
<keyword id="KW-0805">Transcription regulation</keyword>
<keyword id="KW-0862">Zinc</keyword>
<keyword id="KW-0863">Zinc-finger</keyword>
<organism>
    <name type="scientific">Gallus gallus</name>
    <name type="common">Chicken</name>
    <dbReference type="NCBI Taxonomy" id="9031"/>
    <lineage>
        <taxon>Eukaryota</taxon>
        <taxon>Metazoa</taxon>
        <taxon>Chordata</taxon>
        <taxon>Craniata</taxon>
        <taxon>Vertebrata</taxon>
        <taxon>Euteleostomi</taxon>
        <taxon>Archelosauria</taxon>
        <taxon>Archosauria</taxon>
        <taxon>Dinosauria</taxon>
        <taxon>Saurischia</taxon>
        <taxon>Theropoda</taxon>
        <taxon>Coelurosauria</taxon>
        <taxon>Aves</taxon>
        <taxon>Neognathae</taxon>
        <taxon>Galloanserae</taxon>
        <taxon>Galliformes</taxon>
        <taxon>Phasianidae</taxon>
        <taxon>Phasianinae</taxon>
        <taxon>Gallus</taxon>
    </lineage>
</organism>
<comment type="function">
    <text evidence="1">Transcription factor and proto-oncogene whose activation results in up-regulation of target genes, such as IGFII, leading to uncontrolled cell proliferation.</text>
</comment>
<comment type="subcellular location">
    <subcellularLocation>
        <location evidence="1">Nucleus</location>
    </subcellularLocation>
</comment>
<comment type="tissue specificity">
    <text evidence="4">Expressed in nephroblastoma.</text>
</comment>
<comment type="similarity">
    <text evidence="5">Belongs to the krueppel C2H2-type zinc-finger protein family.</text>
</comment>
<proteinExistence type="evidence at transcript level"/>
<protein>
    <recommendedName>
        <fullName>Zinc finger protein PLAG1</fullName>
    </recommendedName>
    <alternativeName>
        <fullName>Pleiomorphic adenoma gene 1 protein</fullName>
    </alternativeName>
</protein>
<name>PLAG1_CHICK</name>
<sequence length="501" mass="55958">MATVIPGDLSEVRDTQKVPSGKRKRGETKPRKNFPCQLCDKAFNSVEKLKVHSYSHTGERPYKCTQQDCTKAFVSKYKLLRHMATHSPEKTHKCNYCEKMFHRKDHLKNHLHTHNPNKEAFKCEECGKNYNTKLGFKRHLALHAATSGDLTCKVCLQTFESTGVLLEHLKTHAGKSSGGVKEKKHQCEHCDRRFYTRKDVRRHMVVHTGRKDFLCQYCAQRFGRKDHLTRHMKKSHNQELLKVKTEPMDLLDPFTCNVSVPIKDELLPVMSLPSSELTSKPFTNTLQLNLYNTQIQSMQSSASAHQMVATSLPLGMPCPIDMESVHPSHQLSLKYPLSSTSYAVSMPEKEQPLKGEIESYLMELQSGMPSSSQDSQASSSKLGLDPQVGPLDDGSGEVSLSKGSVPISEPLNTPSLDFSQLFNFIPVNGPPYNPSVSVGNLGMSYTQEEAHSSMTQLPPQTQDPQDPSNSIGLGSLHSLSAAFTSSLSTTTTLPRFHQAFQ</sequence>
<dbReference type="EMBL" id="AY935990">
    <property type="protein sequence ID" value="AAX36028.1"/>
    <property type="molecule type" value="mRNA"/>
</dbReference>
<dbReference type="RefSeq" id="NP_001026748.1">
    <property type="nucleotide sequence ID" value="NM_001031577.2"/>
</dbReference>
<dbReference type="RefSeq" id="NP_001385305.1">
    <property type="nucleotide sequence ID" value="NM_001398376.1"/>
</dbReference>
<dbReference type="RefSeq" id="NP_001385306.1">
    <property type="nucleotide sequence ID" value="NM_001398377.1"/>
</dbReference>
<dbReference type="RefSeq" id="XP_015138164.1">
    <property type="nucleotide sequence ID" value="XM_015282678.1"/>
</dbReference>
<dbReference type="RefSeq" id="XP_046767687.1">
    <property type="nucleotide sequence ID" value="XM_046911731.1"/>
</dbReference>
<dbReference type="RefSeq" id="XP_046767688.1">
    <property type="nucleotide sequence ID" value="XM_046911732.1"/>
</dbReference>
<dbReference type="RefSeq" id="XP_046767689.1">
    <property type="nucleotide sequence ID" value="XM_046911733.1"/>
</dbReference>
<dbReference type="RefSeq" id="XP_046767690.1">
    <property type="nucleotide sequence ID" value="XM_046911734.1"/>
</dbReference>
<dbReference type="RefSeq" id="XP_046782251.1">
    <property type="nucleotide sequence ID" value="XM_046926295.1"/>
</dbReference>
<dbReference type="RefSeq" id="XP_046782259.1">
    <property type="nucleotide sequence ID" value="XM_046926303.1"/>
</dbReference>
<dbReference type="RefSeq" id="XP_046782265.1">
    <property type="nucleotide sequence ID" value="XM_046926309.1"/>
</dbReference>
<dbReference type="RefSeq" id="XP_046782273.1">
    <property type="nucleotide sequence ID" value="XM_046926317.1"/>
</dbReference>
<dbReference type="SMR" id="Q58NQ5"/>
<dbReference type="FunCoup" id="Q58NQ5">
    <property type="interactions" value="704"/>
</dbReference>
<dbReference type="STRING" id="9031.ENSGALP00000066771"/>
<dbReference type="PaxDb" id="9031-ENSGALP00000024806"/>
<dbReference type="Ensembl" id="ENSGALT00010009345.1">
    <property type="protein sequence ID" value="ENSGALP00010005518.1"/>
    <property type="gene ID" value="ENSGALG00010004042.1"/>
</dbReference>
<dbReference type="GeneID" id="429484"/>
<dbReference type="KEGG" id="gga:429484"/>
<dbReference type="CTD" id="5324"/>
<dbReference type="VEuPathDB" id="HostDB:geneid_429484"/>
<dbReference type="eggNOG" id="KOG1721">
    <property type="taxonomic scope" value="Eukaryota"/>
</dbReference>
<dbReference type="GeneTree" id="ENSGT00940000159246"/>
<dbReference type="HOGENOM" id="CLU_002678_66_1_1"/>
<dbReference type="InParanoid" id="Q58NQ5"/>
<dbReference type="OMA" id="KEAFACQ"/>
<dbReference type="OrthoDB" id="3533395at2759"/>
<dbReference type="PhylomeDB" id="Q58NQ5"/>
<dbReference type="TreeFam" id="TF332024"/>
<dbReference type="PRO" id="PR:Q58NQ5"/>
<dbReference type="Proteomes" id="UP000000539">
    <property type="component" value="Chromosome 2"/>
</dbReference>
<dbReference type="Bgee" id="ENSGALG00000015407">
    <property type="expression patterns" value="Expressed in lung and 11 other cell types or tissues"/>
</dbReference>
<dbReference type="GO" id="GO:0005813">
    <property type="term" value="C:centrosome"/>
    <property type="evidence" value="ECO:0007669"/>
    <property type="project" value="Ensembl"/>
</dbReference>
<dbReference type="GO" id="GO:0005829">
    <property type="term" value="C:cytosol"/>
    <property type="evidence" value="ECO:0007669"/>
    <property type="project" value="Ensembl"/>
</dbReference>
<dbReference type="GO" id="GO:0016607">
    <property type="term" value="C:nuclear speck"/>
    <property type="evidence" value="ECO:0007669"/>
    <property type="project" value="Ensembl"/>
</dbReference>
<dbReference type="GO" id="GO:0001228">
    <property type="term" value="F:DNA-binding transcription activator activity, RNA polymerase II-specific"/>
    <property type="evidence" value="ECO:0007669"/>
    <property type="project" value="Ensembl"/>
</dbReference>
<dbReference type="GO" id="GO:0000981">
    <property type="term" value="F:DNA-binding transcription factor activity, RNA polymerase II-specific"/>
    <property type="evidence" value="ECO:0000318"/>
    <property type="project" value="GO_Central"/>
</dbReference>
<dbReference type="GO" id="GO:0000978">
    <property type="term" value="F:RNA polymerase II cis-regulatory region sequence-specific DNA binding"/>
    <property type="evidence" value="ECO:0000318"/>
    <property type="project" value="GO_Central"/>
</dbReference>
<dbReference type="GO" id="GO:0008270">
    <property type="term" value="F:zinc ion binding"/>
    <property type="evidence" value="ECO:0007669"/>
    <property type="project" value="UniProtKB-KW"/>
</dbReference>
<dbReference type="GO" id="GO:0022612">
    <property type="term" value="P:gland morphogenesis"/>
    <property type="evidence" value="ECO:0007669"/>
    <property type="project" value="Ensembl"/>
</dbReference>
<dbReference type="GO" id="GO:0035264">
    <property type="term" value="P:multicellular organism growth"/>
    <property type="evidence" value="ECO:0007669"/>
    <property type="project" value="Ensembl"/>
</dbReference>
<dbReference type="GO" id="GO:0010629">
    <property type="term" value="P:negative regulation of gene expression"/>
    <property type="evidence" value="ECO:0007669"/>
    <property type="project" value="Ensembl"/>
</dbReference>
<dbReference type="GO" id="GO:0035265">
    <property type="term" value="P:organ growth"/>
    <property type="evidence" value="ECO:0007669"/>
    <property type="project" value="Ensembl"/>
</dbReference>
<dbReference type="GO" id="GO:0010628">
    <property type="term" value="P:positive regulation of gene expression"/>
    <property type="evidence" value="ECO:0007669"/>
    <property type="project" value="Ensembl"/>
</dbReference>
<dbReference type="GO" id="GO:0060252">
    <property type="term" value="P:positive regulation of glial cell proliferation"/>
    <property type="evidence" value="ECO:0007669"/>
    <property type="project" value="Ensembl"/>
</dbReference>
<dbReference type="GO" id="GO:0006355">
    <property type="term" value="P:regulation of DNA-templated transcription"/>
    <property type="evidence" value="ECO:0000318"/>
    <property type="project" value="GO_Central"/>
</dbReference>
<dbReference type="FunFam" id="3.30.160.60:FF:000425">
    <property type="entry name" value="PLAG1 like zinc finger 1"/>
    <property type="match status" value="1"/>
</dbReference>
<dbReference type="FunFam" id="3.30.160.60:FF:000482">
    <property type="entry name" value="PLAG1 like zinc finger 1"/>
    <property type="match status" value="1"/>
</dbReference>
<dbReference type="FunFam" id="3.30.160.60:FF:000231">
    <property type="entry name" value="PLAG1 like zinc finger 2"/>
    <property type="match status" value="1"/>
</dbReference>
<dbReference type="FunFam" id="3.30.160.60:FF:000256">
    <property type="entry name" value="PLAG1 like zinc finger 2"/>
    <property type="match status" value="1"/>
</dbReference>
<dbReference type="FunFam" id="3.30.160.60:FF:001316">
    <property type="entry name" value="PR domain zinc finger protein 10"/>
    <property type="match status" value="1"/>
</dbReference>
<dbReference type="FunFam" id="3.30.160.60:FF:001618">
    <property type="entry name" value="Zinc finger protein 16"/>
    <property type="match status" value="1"/>
</dbReference>
<dbReference type="Gene3D" id="3.30.160.60">
    <property type="entry name" value="Classic Zinc Finger"/>
    <property type="match status" value="6"/>
</dbReference>
<dbReference type="InterPro" id="IPR050331">
    <property type="entry name" value="Zinc_finger"/>
</dbReference>
<dbReference type="InterPro" id="IPR036236">
    <property type="entry name" value="Znf_C2H2_sf"/>
</dbReference>
<dbReference type="InterPro" id="IPR013087">
    <property type="entry name" value="Znf_C2H2_type"/>
</dbReference>
<dbReference type="PANTHER" id="PTHR16515:SF23">
    <property type="entry name" value="PLAG1 LIKE ZINC FINGER 1"/>
    <property type="match status" value="1"/>
</dbReference>
<dbReference type="PANTHER" id="PTHR16515">
    <property type="entry name" value="PR DOMAIN ZINC FINGER PROTEIN"/>
    <property type="match status" value="1"/>
</dbReference>
<dbReference type="Pfam" id="PF00096">
    <property type="entry name" value="zf-C2H2"/>
    <property type="match status" value="4"/>
</dbReference>
<dbReference type="Pfam" id="PF13912">
    <property type="entry name" value="zf-C2H2_6"/>
    <property type="match status" value="2"/>
</dbReference>
<dbReference type="SMART" id="SM00355">
    <property type="entry name" value="ZnF_C2H2"/>
    <property type="match status" value="7"/>
</dbReference>
<dbReference type="SUPFAM" id="SSF57667">
    <property type="entry name" value="beta-beta-alpha zinc fingers"/>
    <property type="match status" value="4"/>
</dbReference>
<dbReference type="PROSITE" id="PS00028">
    <property type="entry name" value="ZINC_FINGER_C2H2_1"/>
    <property type="match status" value="7"/>
</dbReference>
<dbReference type="PROSITE" id="PS50157">
    <property type="entry name" value="ZINC_FINGER_C2H2_2"/>
    <property type="match status" value="7"/>
</dbReference>
<feature type="chain" id="PRO_0000295110" description="Zinc finger protein PLAG1">
    <location>
        <begin position="1"/>
        <end position="501"/>
    </location>
</feature>
<feature type="zinc finger region" description="C2H2-type 1" evidence="2">
    <location>
        <begin position="34"/>
        <end position="56"/>
    </location>
</feature>
<feature type="zinc finger region" description="C2H2-type 2" evidence="2">
    <location>
        <begin position="62"/>
        <end position="86"/>
    </location>
</feature>
<feature type="zinc finger region" description="C2H2-type 3" evidence="2">
    <location>
        <begin position="92"/>
        <end position="114"/>
    </location>
</feature>
<feature type="zinc finger region" description="C2H2-type 4" evidence="2">
    <location>
        <begin position="121"/>
        <end position="143"/>
    </location>
</feature>
<feature type="zinc finger region" description="C2H2-type 5" evidence="2">
    <location>
        <begin position="150"/>
        <end position="172"/>
    </location>
</feature>
<feature type="zinc finger region" description="C2H2-type 6" evidence="2">
    <location>
        <begin position="185"/>
        <end position="207"/>
    </location>
</feature>
<feature type="zinc finger region" description="C2H2-type 7" evidence="2">
    <location>
        <begin position="213"/>
        <end position="236"/>
    </location>
</feature>
<feature type="region of interest" description="Disordered" evidence="3">
    <location>
        <begin position="1"/>
        <end position="30"/>
    </location>
</feature>
<feature type="region of interest" description="Disordered" evidence="3">
    <location>
        <begin position="366"/>
        <end position="406"/>
    </location>
</feature>
<feature type="region of interest" description="Disordered" evidence="3">
    <location>
        <begin position="447"/>
        <end position="474"/>
    </location>
</feature>
<feature type="short sequence motif" description="Nuclear localization signal" evidence="1">
    <location>
        <begin position="22"/>
        <end position="25"/>
    </location>
</feature>
<feature type="compositionally biased region" description="Low complexity" evidence="3">
    <location>
        <begin position="366"/>
        <end position="380"/>
    </location>
</feature>
<feature type="compositionally biased region" description="Low complexity" evidence="3">
    <location>
        <begin position="455"/>
        <end position="467"/>
    </location>
</feature>
<evidence type="ECO:0000250" key="1"/>
<evidence type="ECO:0000255" key="2">
    <source>
        <dbReference type="PROSITE-ProRule" id="PRU00042"/>
    </source>
</evidence>
<evidence type="ECO:0000256" key="3">
    <source>
        <dbReference type="SAM" id="MobiDB-lite"/>
    </source>
</evidence>
<evidence type="ECO:0000269" key="4">
    <source>
    </source>
</evidence>
<evidence type="ECO:0000305" key="5"/>
<gene>
    <name type="primary">PLAG1</name>
</gene>